<feature type="chain" id="PRO_0000164411" description="1,6-anhydro-N-acetylmuramyl-L-alanine amidase AmpD">
    <location>
        <begin position="1"/>
        <end position="187"/>
    </location>
</feature>
<feature type="domain" description="N-acetylmuramoyl-L-alanine amidase" evidence="2">
    <location>
        <begin position="30"/>
        <end position="167"/>
    </location>
</feature>
<feature type="active site" description="Proton acceptor" evidence="1">
    <location>
        <position position="116"/>
    </location>
</feature>
<feature type="binding site" evidence="3">
    <location>
        <position position="34"/>
    </location>
    <ligand>
        <name>Zn(2+)</name>
        <dbReference type="ChEBI" id="CHEBI:29105"/>
        <note>catalytic</note>
    </ligand>
</feature>
<feature type="binding site" evidence="3">
    <location>
        <position position="154"/>
    </location>
    <ligand>
        <name>Zn(2+)</name>
        <dbReference type="ChEBI" id="CHEBI:29105"/>
        <note>catalytic</note>
    </ligand>
</feature>
<feature type="binding site" evidence="3">
    <location>
        <position position="164"/>
    </location>
    <ligand>
        <name>Zn(2+)</name>
        <dbReference type="ChEBI" id="CHEBI:29105"/>
        <note>catalytic</note>
    </ligand>
</feature>
<feature type="site" description="Transition state stabilizer" evidence="1">
    <location>
        <position position="162"/>
    </location>
</feature>
<feature type="mutagenesis site" description="Loss of activity." evidence="4">
    <original>H</original>
    <variation>A</variation>
    <location>
        <position position="34"/>
    </location>
</feature>
<feature type="mutagenesis site" description="6-fold decrease in activity." evidence="4">
    <original>Y</original>
    <variation>F</variation>
    <location>
        <position position="63"/>
    </location>
</feature>
<feature type="mutagenesis site" description="Loss of activity." evidence="4">
    <original>E</original>
    <variation>A</variation>
    <location>
        <position position="116"/>
    </location>
</feature>
<feature type="mutagenesis site" description="Loss of activity." evidence="4">
    <original>H</original>
    <variation>A</variation>
    <location>
        <position position="154"/>
    </location>
</feature>
<feature type="mutagenesis site" description="Retains both its capacity to bind the zinc ion and good amidase activity." evidence="4">
    <original>H</original>
    <variation>N</variation>
    <location>
        <position position="154"/>
    </location>
</feature>
<feature type="mutagenesis site" description="Almost loss of activity." evidence="4">
    <original>K</original>
    <variation>H</variation>
    <variation>Q</variation>
    <location>
        <position position="162"/>
    </location>
</feature>
<feature type="mutagenesis site" description="Loss of activity." evidence="4">
    <original>D</original>
    <variation>A</variation>
    <location>
        <position position="164"/>
    </location>
</feature>
<feature type="strand" evidence="9">
    <location>
        <begin position="11"/>
        <end position="13"/>
    </location>
</feature>
<feature type="strand" evidence="9">
    <location>
        <begin position="19"/>
        <end position="21"/>
    </location>
</feature>
<feature type="helix" evidence="9">
    <location>
        <begin position="23"/>
        <end position="25"/>
    </location>
</feature>
<feature type="strand" evidence="9">
    <location>
        <begin position="30"/>
        <end position="36"/>
    </location>
</feature>
<feature type="helix" evidence="9">
    <location>
        <begin position="47"/>
        <end position="52"/>
    </location>
</feature>
<feature type="helix" evidence="9">
    <location>
        <begin position="62"/>
        <end position="67"/>
    </location>
</feature>
<feature type="strand" evidence="9">
    <location>
        <begin position="75"/>
        <end position="78"/>
    </location>
</feature>
<feature type="turn" evidence="8">
    <location>
        <begin position="80"/>
        <end position="82"/>
    </location>
</feature>
<feature type="strand" evidence="9">
    <location>
        <begin position="84"/>
        <end position="86"/>
    </location>
</feature>
<feature type="strand" evidence="9">
    <location>
        <begin position="92"/>
        <end position="95"/>
    </location>
</feature>
<feature type="strand" evidence="8">
    <location>
        <begin position="100"/>
        <end position="102"/>
    </location>
</feature>
<feature type="helix" evidence="9">
    <location>
        <begin position="108"/>
        <end position="111"/>
    </location>
</feature>
<feature type="strand" evidence="9">
    <location>
        <begin position="112"/>
        <end position="119"/>
    </location>
</feature>
<feature type="strand" evidence="9">
    <location>
        <begin position="121"/>
        <end position="123"/>
    </location>
</feature>
<feature type="helix" evidence="9">
    <location>
        <begin position="127"/>
        <end position="143"/>
    </location>
</feature>
<feature type="helix" evidence="9">
    <location>
        <begin position="145"/>
        <end position="149"/>
    </location>
</feature>
<feature type="strand" evidence="9">
    <location>
        <begin position="151"/>
        <end position="153"/>
    </location>
</feature>
<feature type="helix" evidence="9">
    <location>
        <begin position="154"/>
        <end position="157"/>
    </location>
</feature>
<feature type="turn" evidence="9">
    <location>
        <begin position="159"/>
        <end position="161"/>
    </location>
</feature>
<feature type="turn" evidence="10">
    <location>
        <begin position="164"/>
        <end position="168"/>
    </location>
</feature>
<feature type="helix" evidence="9">
    <location>
        <begin position="171"/>
        <end position="177"/>
    </location>
</feature>
<keyword id="KW-0002">3D-structure</keyword>
<keyword id="KW-0961">Cell wall biogenesis/degradation</keyword>
<keyword id="KW-0963">Cytoplasm</keyword>
<keyword id="KW-0378">Hydrolase</keyword>
<keyword id="KW-0479">Metal-binding</keyword>
<keyword id="KW-0862">Zinc</keyword>
<sequence length="187" mass="20847">MLLDEGWLAEARRVPSPHYDCRPDDENPSLLVVHNISLPPGEFGGPWIDALFTGTIDPNAHPYFAGIAHLRVSAHCLIRRDGEIVQYVPFDKRAWHAGVSSYQGRERCNDFSIGIELEGTDTLAYTDAQYQQLAAVTNALITRYPAIANNMTGHCNIAPERKTDPGPSFDWARFRALVTPSSHKEMT</sequence>
<proteinExistence type="evidence at protein level"/>
<organism>
    <name type="scientific">Citrobacter freundii</name>
    <dbReference type="NCBI Taxonomy" id="546"/>
    <lineage>
        <taxon>Bacteria</taxon>
        <taxon>Pseudomonadati</taxon>
        <taxon>Pseudomonadota</taxon>
        <taxon>Gammaproteobacteria</taxon>
        <taxon>Enterobacterales</taxon>
        <taxon>Enterobacteriaceae</taxon>
        <taxon>Citrobacter</taxon>
        <taxon>Citrobacter freundii complex</taxon>
    </lineage>
</organism>
<accession>P82974</accession>
<accession>Q00831</accession>
<protein>
    <recommendedName>
        <fullName evidence="7">1,6-anhydro-N-acetylmuramyl-L-alanine amidase AmpD</fullName>
        <ecNumber evidence="4">3.5.1.28</ecNumber>
    </recommendedName>
    <alternativeName>
        <fullName evidence="7">N-acetylmuramoyl-L-alanine amidase</fullName>
    </alternativeName>
</protein>
<gene>
    <name evidence="6" type="primary">ampD</name>
</gene>
<reference key="1">
    <citation type="journal article" date="1993" name="Antimicrob. Agents Chemother.">
        <title>Sequences of wild-type and mutant ampD genes of Citrobacter freundii and Enterobacter cloacae.</title>
        <authorList>
            <person name="Kopp U."/>
            <person name="Wiedemann B."/>
            <person name="Lindquist S."/>
            <person name="Normark S."/>
        </authorList>
    </citation>
    <scope>NUCLEOTIDE SEQUENCE [GENOMIC DNA]</scope>
    <scope>FUNCTION</scope>
    <source>
        <strain>OS60</strain>
    </source>
</reference>
<reference key="2">
    <citation type="journal article" date="2004" name="Biochem. J.">
        <title>Mutational analysis of the catalytic centre of the Citrobacter freundii AmpD N-acetylmuramyl-L-alanine amidase.</title>
        <authorList>
            <person name="Genereux C."/>
            <person name="Dehareng D."/>
            <person name="Devreese B."/>
            <person name="Van Beeumen J."/>
            <person name="Frere J.M."/>
            <person name="Joris B."/>
        </authorList>
    </citation>
    <scope>FUNCTION</scope>
    <scope>CATALYTIC ACTIVITY</scope>
    <scope>COFACTOR</scope>
    <scope>ACTIVITY REGULATION</scope>
    <scope>MUTAGENESIS OF HIS-34; TYR-63; GLU-116; HIS-154; LYS-162 AND ASP-164</scope>
</reference>
<reference key="3">
    <citation type="journal article" date="2003" name="J. Mol. Biol.">
        <title>NMR structure of Citrobacter freundii AmpD, comparison with bacteriophage T7 lysozyme and homology with PGRP domains.</title>
        <authorList>
            <person name="Liepinsh E."/>
            <person name="Genereux C."/>
            <person name="Dehareng D."/>
            <person name="Joris B."/>
            <person name="Otting G."/>
        </authorList>
    </citation>
    <scope>STRUCTURE BY NMR</scope>
    <scope>ZINC-BINDING SITES</scope>
    <scope>COFACTOR</scope>
</reference>
<dbReference type="EC" id="3.5.1.28" evidence="4"/>
<dbReference type="EMBL" id="Z14002">
    <property type="protein sequence ID" value="CAA78390.2"/>
    <property type="molecule type" value="Genomic_DNA"/>
</dbReference>
<dbReference type="RefSeq" id="WP_003018719.1">
    <property type="nucleotide sequence ID" value="NZ_VWTQ01000005.1"/>
</dbReference>
<dbReference type="PDB" id="1J3G">
    <property type="method" value="NMR"/>
    <property type="chains" value="A=1-187"/>
</dbReference>
<dbReference type="PDB" id="2Y28">
    <property type="method" value="X-ray"/>
    <property type="resolution" value="1.80 A"/>
    <property type="chains" value="A/B/C=1-187"/>
</dbReference>
<dbReference type="PDB" id="2Y2B">
    <property type="method" value="X-ray"/>
    <property type="resolution" value="1.90 A"/>
    <property type="chains" value="A/B/C=1-187"/>
</dbReference>
<dbReference type="PDB" id="2Y2C">
    <property type="method" value="X-ray"/>
    <property type="resolution" value="1.80 A"/>
    <property type="chains" value="A/B/C=1-187"/>
</dbReference>
<dbReference type="PDB" id="2Y2D">
    <property type="method" value="X-ray"/>
    <property type="resolution" value="2.00 A"/>
    <property type="chains" value="A/B/C=1-187"/>
</dbReference>
<dbReference type="PDB" id="2Y2E">
    <property type="method" value="X-ray"/>
    <property type="resolution" value="2.00 A"/>
    <property type="chains" value="A/B/C=1-187"/>
</dbReference>
<dbReference type="PDBsum" id="1J3G"/>
<dbReference type="PDBsum" id="2Y28"/>
<dbReference type="PDBsum" id="2Y2B"/>
<dbReference type="PDBsum" id="2Y2C"/>
<dbReference type="PDBsum" id="2Y2D"/>
<dbReference type="PDBsum" id="2Y2E"/>
<dbReference type="BMRB" id="P82974"/>
<dbReference type="SMR" id="P82974"/>
<dbReference type="STRING" id="1333848.CFNIH1_10245"/>
<dbReference type="OrthoDB" id="9794842at2"/>
<dbReference type="EvolutionaryTrace" id="P82974"/>
<dbReference type="GO" id="GO:0005737">
    <property type="term" value="C:cytoplasm"/>
    <property type="evidence" value="ECO:0007669"/>
    <property type="project" value="UniProtKB-SubCell"/>
</dbReference>
<dbReference type="GO" id="GO:0046872">
    <property type="term" value="F:metal ion binding"/>
    <property type="evidence" value="ECO:0007669"/>
    <property type="project" value="UniProtKB-KW"/>
</dbReference>
<dbReference type="GO" id="GO:0008745">
    <property type="term" value="F:N-acetylmuramoyl-L-alanine amidase activity"/>
    <property type="evidence" value="ECO:0000314"/>
    <property type="project" value="CACAO"/>
</dbReference>
<dbReference type="GO" id="GO:0071555">
    <property type="term" value="P:cell wall organization"/>
    <property type="evidence" value="ECO:0007669"/>
    <property type="project" value="UniProtKB-KW"/>
</dbReference>
<dbReference type="GO" id="GO:0009253">
    <property type="term" value="P:peptidoglycan catabolic process"/>
    <property type="evidence" value="ECO:0007669"/>
    <property type="project" value="InterPro"/>
</dbReference>
<dbReference type="GO" id="GO:0009254">
    <property type="term" value="P:peptidoglycan turnover"/>
    <property type="evidence" value="ECO:0007669"/>
    <property type="project" value="TreeGrafter"/>
</dbReference>
<dbReference type="CDD" id="cd06583">
    <property type="entry name" value="PGRP"/>
    <property type="match status" value="1"/>
</dbReference>
<dbReference type="FunFam" id="3.40.80.10:FF:000002">
    <property type="entry name" value="1,6-anhydro-N-acetylmuramyl-L-alanine amidase"/>
    <property type="match status" value="1"/>
</dbReference>
<dbReference type="Gene3D" id="3.40.80.10">
    <property type="entry name" value="Peptidoglycan recognition protein-like"/>
    <property type="match status" value="1"/>
</dbReference>
<dbReference type="InterPro" id="IPR036505">
    <property type="entry name" value="Amidase/PGRP_sf"/>
</dbReference>
<dbReference type="InterPro" id="IPR002502">
    <property type="entry name" value="Amidase_domain"/>
</dbReference>
<dbReference type="InterPro" id="IPR051206">
    <property type="entry name" value="NAMLAA_amidase_2"/>
</dbReference>
<dbReference type="NCBIfam" id="NF008758">
    <property type="entry name" value="PRK11789.1"/>
    <property type="match status" value="1"/>
</dbReference>
<dbReference type="PANTHER" id="PTHR30417:SF4">
    <property type="entry name" value="1,6-ANHYDRO-N-ACETYLMURAMYL-L-ALANINE AMIDASE AMPD"/>
    <property type="match status" value="1"/>
</dbReference>
<dbReference type="PANTHER" id="PTHR30417">
    <property type="entry name" value="N-ACETYLMURAMOYL-L-ALANINE AMIDASE AMID"/>
    <property type="match status" value="1"/>
</dbReference>
<dbReference type="Pfam" id="PF01510">
    <property type="entry name" value="Amidase_2"/>
    <property type="match status" value="1"/>
</dbReference>
<dbReference type="SMART" id="SM00644">
    <property type="entry name" value="Ami_2"/>
    <property type="match status" value="1"/>
</dbReference>
<dbReference type="SUPFAM" id="SSF55846">
    <property type="entry name" value="N-acetylmuramoyl-L-alanine amidase-like"/>
    <property type="match status" value="1"/>
</dbReference>
<evidence type="ECO:0000250" key="1">
    <source>
        <dbReference type="UniProtKB" id="P75820"/>
    </source>
</evidence>
<evidence type="ECO:0000255" key="2"/>
<evidence type="ECO:0000269" key="3">
    <source>
    </source>
</evidence>
<evidence type="ECO:0000269" key="4">
    <source>
    </source>
</evidence>
<evidence type="ECO:0000269" key="5">
    <source>
    </source>
</evidence>
<evidence type="ECO:0000303" key="6">
    <source>
    </source>
</evidence>
<evidence type="ECO:0000305" key="7"/>
<evidence type="ECO:0007829" key="8">
    <source>
        <dbReference type="PDB" id="1J3G"/>
    </source>
</evidence>
<evidence type="ECO:0007829" key="9">
    <source>
        <dbReference type="PDB" id="2Y28"/>
    </source>
</evidence>
<evidence type="ECO:0007829" key="10">
    <source>
        <dbReference type="PDB" id="2Y2D"/>
    </source>
</evidence>
<comment type="function">
    <text evidence="4 5">Involved in cell wall peptidoglycan recycling (PubMed:14507260). Specifically cleaves the amide bond between the lactyl group of N-acetylmuramic acid and the alpha-amino group of the L-alanine in degradation products containing an anhydro N-acetylmuramyl moiety (PubMed:14507260). Is also involved in beta-lactamase induction (PubMed:8383940).</text>
</comment>
<comment type="catalytic activity">
    <reaction evidence="4">
        <text>Hydrolyzes the link between N-acetylmuramoyl residues and L-amino acid residues in certain cell-wall glycopeptides.</text>
        <dbReference type="EC" id="3.5.1.28"/>
    </reaction>
</comment>
<comment type="cofactor">
    <cofactor evidence="3 4">
        <name>Zn(2+)</name>
        <dbReference type="ChEBI" id="CHEBI:29105"/>
    </cofactor>
    <text evidence="4">Zn(2+) is required for amidase activity.</text>
</comment>
<comment type="activity regulation">
    <text evidence="4">Amidase activity is inhibited by metal chelators such as EDTA, dipicolinic acid or 1,10-phenanthroline.</text>
</comment>
<comment type="subcellular location">
    <subcellularLocation>
        <location evidence="7">Cytoplasm</location>
    </subcellularLocation>
</comment>
<comment type="similarity">
    <text evidence="7">Belongs to the N-acetylmuramoyl-L-alanine amidase 2 family.</text>
</comment>
<name>AMPD_CITFR</name>